<gene>
    <name type="primary">mtlD</name>
    <name type="ordered locus">SMU_1182</name>
</gene>
<name>MTLD_STRMU</name>
<comment type="catalytic activity">
    <reaction>
        <text>D-mannitol 1-phosphate + NAD(+) = beta-D-fructose 6-phosphate + NADH + H(+)</text>
        <dbReference type="Rhea" id="RHEA:19661"/>
        <dbReference type="ChEBI" id="CHEBI:15378"/>
        <dbReference type="ChEBI" id="CHEBI:57540"/>
        <dbReference type="ChEBI" id="CHEBI:57634"/>
        <dbReference type="ChEBI" id="CHEBI:57945"/>
        <dbReference type="ChEBI" id="CHEBI:61381"/>
        <dbReference type="EC" id="1.1.1.17"/>
    </reaction>
</comment>
<comment type="subunit">
    <text>Monomer.</text>
</comment>
<comment type="similarity">
    <text evidence="2">Belongs to the mannitol dehydrogenase family.</text>
</comment>
<proteinExistence type="inferred from homology"/>
<evidence type="ECO:0000250" key="1"/>
<evidence type="ECO:0000305" key="2"/>
<accession>Q02418</accession>
<feature type="chain" id="PRO_0000170725" description="Mannitol-1-phosphate 5-dehydrogenase">
    <location>
        <begin position="1"/>
        <end position="382"/>
    </location>
</feature>
<feature type="binding site" evidence="1">
    <location>
        <begin position="4"/>
        <end position="15"/>
    </location>
    <ligand>
        <name>NAD(+)</name>
        <dbReference type="ChEBI" id="CHEBI:57540"/>
    </ligand>
</feature>
<feature type="sequence conflict" description="In Ref. 1; AAA26942." evidence="2" ref="1">
    <original>E</original>
    <variation>K</variation>
    <location>
        <position position="170"/>
    </location>
</feature>
<reference key="1">
    <citation type="journal article" date="1992" name="Infect. Immun.">
        <title>Isolation, characterization, and nucleotide sequence of the Streptococcus mutans mannitol-phosphate dehydrogenase gene and the mannitol-specific factor III gene of the phosphoenolpyruvate phosphotransferase system.</title>
        <authorList>
            <person name="Honeyman A.L."/>
            <person name="Curtiss R. III"/>
        </authorList>
    </citation>
    <scope>NUCLEOTIDE SEQUENCE [GENOMIC DNA]</scope>
    <source>
        <strain>ATCC 700611 / UA130 / Serotype c</strain>
    </source>
</reference>
<reference key="2">
    <citation type="journal article" date="2002" name="Proc. Natl. Acad. Sci. U.S.A.">
        <title>Genome sequence of Streptococcus mutans UA159, a cariogenic dental pathogen.</title>
        <authorList>
            <person name="Ajdic D.J."/>
            <person name="McShan W.M."/>
            <person name="McLaughlin R.E."/>
            <person name="Savic G."/>
            <person name="Chang J."/>
            <person name="Carson M.B."/>
            <person name="Primeaux C."/>
            <person name="Tian R."/>
            <person name="Kenton S."/>
            <person name="Jia H.G."/>
            <person name="Lin S.P."/>
            <person name="Qian Y."/>
            <person name="Li S."/>
            <person name="Zhu H."/>
            <person name="Najar F.Z."/>
            <person name="Lai H."/>
            <person name="White J."/>
            <person name="Roe B.A."/>
            <person name="Ferretti J.J."/>
        </authorList>
    </citation>
    <scope>NUCLEOTIDE SEQUENCE [LARGE SCALE GENOMIC DNA]</scope>
    <source>
        <strain>ATCC 700610 / UA159</strain>
    </source>
</reference>
<sequence>MKKAVHFGAGNIGRGFIGQILFENGFAIDFVDVNDKIINALNERHSYDIEIAEDGKRHITVSNVAGINNKENPQAVIDAVAETELITTAIGPNILPFIAQLIAKGIEKRRESQNQTPLDIIACENMIGGSAFLWQEVQKYLSADGLAFAKDYIGFPNAAVDRIVPAQVHEDPLFVVVEPFSEWVVETAAMKNPDLKLSSVHYEENLEPFIERKLFSVNSGHATTAYTGAYFGAKTVLEALKDQQVKEQVKAVLGEIRQLLMAKWQFKENDLKVYHDIIISRFENPYIVDDVTRVARTPIRKLGYDERFIRPIRELKDRGLSYEYLLQTVAYVFHYKDSNDEQSVQLKLLLQEKSLKAVVKEVTGLTDAALIEEIVTSVESLD</sequence>
<protein>
    <recommendedName>
        <fullName>Mannitol-1-phosphate 5-dehydrogenase</fullName>
        <ecNumber>1.1.1.17</ecNumber>
    </recommendedName>
</protein>
<keyword id="KW-0520">NAD</keyword>
<keyword id="KW-0560">Oxidoreductase</keyword>
<keyword id="KW-1185">Reference proteome</keyword>
<dbReference type="EC" id="1.1.1.17"/>
<dbReference type="EMBL" id="AF210133">
    <property type="protein sequence ID" value="AAA26942.1"/>
    <property type="molecule type" value="Genomic_DNA"/>
</dbReference>
<dbReference type="EMBL" id="AE014133">
    <property type="protein sequence ID" value="AAN58872.1"/>
    <property type="molecule type" value="Genomic_DNA"/>
</dbReference>
<dbReference type="PIR" id="C44798">
    <property type="entry name" value="C44798"/>
</dbReference>
<dbReference type="RefSeq" id="NP_721566.1">
    <property type="nucleotide sequence ID" value="NC_004350.2"/>
</dbReference>
<dbReference type="RefSeq" id="WP_002262168.1">
    <property type="nucleotide sequence ID" value="NC_004350.2"/>
</dbReference>
<dbReference type="SMR" id="Q02418"/>
<dbReference type="STRING" id="210007.SMU_1182"/>
<dbReference type="KEGG" id="smu:SMU_1182"/>
<dbReference type="PATRIC" id="fig|210007.7.peg.1060"/>
<dbReference type="eggNOG" id="COG0246">
    <property type="taxonomic scope" value="Bacteria"/>
</dbReference>
<dbReference type="HOGENOM" id="CLU_036089_2_0_9"/>
<dbReference type="OrthoDB" id="271711at2"/>
<dbReference type="PhylomeDB" id="Q02418"/>
<dbReference type="BioCyc" id="MetaCyc:MONOMER-13098"/>
<dbReference type="Proteomes" id="UP000002512">
    <property type="component" value="Chromosome"/>
</dbReference>
<dbReference type="GO" id="GO:0005829">
    <property type="term" value="C:cytosol"/>
    <property type="evidence" value="ECO:0007669"/>
    <property type="project" value="TreeGrafter"/>
</dbReference>
<dbReference type="GO" id="GO:0008926">
    <property type="term" value="F:mannitol-1-phosphate 5-dehydrogenase activity"/>
    <property type="evidence" value="ECO:0007669"/>
    <property type="project" value="UniProtKB-UniRule"/>
</dbReference>
<dbReference type="GO" id="GO:0019592">
    <property type="term" value="P:mannitol catabolic process"/>
    <property type="evidence" value="ECO:0007669"/>
    <property type="project" value="TreeGrafter"/>
</dbReference>
<dbReference type="Gene3D" id="1.10.1040.10">
    <property type="entry name" value="N-(1-d-carboxylethyl)-l-norvaline Dehydrogenase, domain 2"/>
    <property type="match status" value="1"/>
</dbReference>
<dbReference type="Gene3D" id="3.40.50.720">
    <property type="entry name" value="NAD(P)-binding Rossmann-like Domain"/>
    <property type="match status" value="1"/>
</dbReference>
<dbReference type="HAMAP" id="MF_00196">
    <property type="entry name" value="Mannitol_dehydrog"/>
    <property type="match status" value="1"/>
</dbReference>
<dbReference type="InterPro" id="IPR008927">
    <property type="entry name" value="6-PGluconate_DH-like_C_sf"/>
</dbReference>
<dbReference type="InterPro" id="IPR013328">
    <property type="entry name" value="6PGD_dom2"/>
</dbReference>
<dbReference type="InterPro" id="IPR023028">
    <property type="entry name" value="Mannitol_1_phos_5_DH"/>
</dbReference>
<dbReference type="InterPro" id="IPR000669">
    <property type="entry name" value="Mannitol_DH"/>
</dbReference>
<dbReference type="InterPro" id="IPR013118">
    <property type="entry name" value="Mannitol_DH_C"/>
</dbReference>
<dbReference type="InterPro" id="IPR023027">
    <property type="entry name" value="Mannitol_DH_CS"/>
</dbReference>
<dbReference type="InterPro" id="IPR013131">
    <property type="entry name" value="Mannitol_DH_N"/>
</dbReference>
<dbReference type="InterPro" id="IPR036291">
    <property type="entry name" value="NAD(P)-bd_dom_sf"/>
</dbReference>
<dbReference type="NCBIfam" id="NF002646">
    <property type="entry name" value="PRK02318.1-2"/>
    <property type="match status" value="1"/>
</dbReference>
<dbReference type="NCBIfam" id="NF002647">
    <property type="entry name" value="PRK02318.1-3"/>
    <property type="match status" value="1"/>
</dbReference>
<dbReference type="NCBIfam" id="NF002652">
    <property type="entry name" value="PRK02318.2-5"/>
    <property type="match status" value="1"/>
</dbReference>
<dbReference type="PANTHER" id="PTHR30524:SF0">
    <property type="entry name" value="ALTRONATE OXIDOREDUCTASE-RELATED"/>
    <property type="match status" value="1"/>
</dbReference>
<dbReference type="PANTHER" id="PTHR30524">
    <property type="entry name" value="MANNITOL-1-PHOSPHATE 5-DEHYDROGENASE"/>
    <property type="match status" value="1"/>
</dbReference>
<dbReference type="Pfam" id="PF01232">
    <property type="entry name" value="Mannitol_dh"/>
    <property type="match status" value="1"/>
</dbReference>
<dbReference type="Pfam" id="PF08125">
    <property type="entry name" value="Mannitol_dh_C"/>
    <property type="match status" value="1"/>
</dbReference>
<dbReference type="PRINTS" id="PR00084">
    <property type="entry name" value="MTLDHDRGNASE"/>
</dbReference>
<dbReference type="SUPFAM" id="SSF48179">
    <property type="entry name" value="6-phosphogluconate dehydrogenase C-terminal domain-like"/>
    <property type="match status" value="1"/>
</dbReference>
<dbReference type="SUPFAM" id="SSF51735">
    <property type="entry name" value="NAD(P)-binding Rossmann-fold domains"/>
    <property type="match status" value="1"/>
</dbReference>
<dbReference type="PROSITE" id="PS00974">
    <property type="entry name" value="MANNITOL_DHGENASE"/>
    <property type="match status" value="1"/>
</dbReference>
<organism>
    <name type="scientific">Streptococcus mutans serotype c (strain ATCC 700610 / UA159)</name>
    <dbReference type="NCBI Taxonomy" id="210007"/>
    <lineage>
        <taxon>Bacteria</taxon>
        <taxon>Bacillati</taxon>
        <taxon>Bacillota</taxon>
        <taxon>Bacilli</taxon>
        <taxon>Lactobacillales</taxon>
        <taxon>Streptococcaceae</taxon>
        <taxon>Streptococcus</taxon>
    </lineage>
</organism>